<sequence>MSRFQRLTKYVAIGGGAALLLAGAAYLAGAKVNTTKSIPVGLYWKSNAPVEKGAYVMFCPPQVGVFSDAKERGYIAGGFCPGDYGYMMKRVLAAKGDEVAITDAGVRVNGGLLPHSALIKADPSGRPLPRYQSDSYTLGTAEVLLMSDVSDTSFDGRYFGPVNRSQIITVIRPVLTW</sequence>
<protein>
    <recommendedName>
        <fullName>Plasmid transfer protein TraF</fullName>
    </recommendedName>
</protein>
<accession>Q03450</accession>
<gene>
    <name type="primary">traF</name>
</gene>
<reference key="1">
    <citation type="journal article" date="1992" name="J. Bacteriol.">
        <title>Mutational analysis of essential IncP alpha plasmid transfer genes traF and traG and involvement of traF in phage sensitivity.</title>
        <authorList>
            <person name="Waters V.L."/>
            <person name="Strack B."/>
            <person name="Pansegrau W."/>
            <person name="Lanka E."/>
            <person name="Guiney D.G."/>
        </authorList>
    </citation>
    <scope>NUCLEOTIDE SEQUENCE [GENOMIC DNA]</scope>
</reference>
<keyword id="KW-0184">Conjugation</keyword>
<keyword id="KW-0574">Periplasm</keyword>
<keyword id="KW-0614">Plasmid</keyword>
<keyword id="KW-0732">Signal</keyword>
<dbReference type="EMBL" id="M94366">
    <property type="protein sequence ID" value="AAA98335.1"/>
    <property type="molecule type" value="Genomic_DNA"/>
</dbReference>
<dbReference type="RefSeq" id="WP_011205816.1">
    <property type="nucleotide sequence ID" value="NZ_VMTS01000048.1"/>
</dbReference>
<dbReference type="MEROPS" id="S26.014"/>
<dbReference type="GO" id="GO:0042597">
    <property type="term" value="C:periplasmic space"/>
    <property type="evidence" value="ECO:0007669"/>
    <property type="project" value="UniProtKB-SubCell"/>
</dbReference>
<dbReference type="GO" id="GO:0004252">
    <property type="term" value="F:serine-type endopeptidase activity"/>
    <property type="evidence" value="ECO:0007669"/>
    <property type="project" value="InterPro"/>
</dbReference>
<dbReference type="GO" id="GO:0006465">
    <property type="term" value="P:signal peptide processing"/>
    <property type="evidence" value="ECO:0007669"/>
    <property type="project" value="InterPro"/>
</dbReference>
<dbReference type="Gene3D" id="2.10.109.10">
    <property type="entry name" value="Umud Fragment, subunit A"/>
    <property type="match status" value="1"/>
</dbReference>
<dbReference type="InterPro" id="IPR036286">
    <property type="entry name" value="LexA/Signal_pep-like_sf"/>
</dbReference>
<dbReference type="InterPro" id="IPR019533">
    <property type="entry name" value="Peptidase_S26"/>
</dbReference>
<dbReference type="InterPro" id="IPR014139">
    <property type="entry name" value="Peptidase_S26C_TraF"/>
</dbReference>
<dbReference type="NCBIfam" id="NF010459">
    <property type="entry name" value="PRK13884.1"/>
    <property type="match status" value="1"/>
</dbReference>
<dbReference type="NCBIfam" id="TIGR02771">
    <property type="entry name" value="TraF_Ti"/>
    <property type="match status" value="1"/>
</dbReference>
<dbReference type="Pfam" id="PF10502">
    <property type="entry name" value="Peptidase_S26"/>
    <property type="match status" value="1"/>
</dbReference>
<dbReference type="SUPFAM" id="SSF51306">
    <property type="entry name" value="LexA/Signal peptidase"/>
    <property type="match status" value="1"/>
</dbReference>
<proteinExistence type="inferred from homology"/>
<geneLocation type="plasmid">
    <name>IncP-alpha RP4</name>
</geneLocation>
<feature type="signal peptide" evidence="1">
    <location>
        <begin position="1"/>
        <end position="30"/>
    </location>
</feature>
<feature type="chain" id="PRO_0000024515" description="Plasmid transfer protein TraF">
    <location>
        <begin position="31"/>
        <end position="177"/>
    </location>
</feature>
<name>TRAF4_ECOLX</name>
<comment type="function">
    <text>Required for donor-specific phage sensitivity. May be involved in pilus assembly.</text>
</comment>
<comment type="subcellular location">
    <subcellularLocation>
        <location evidence="2">Periplasm</location>
    </subcellularLocation>
</comment>
<comment type="similarity">
    <text evidence="2">Belongs to the peptidase S26C family.</text>
</comment>
<evidence type="ECO:0000255" key="1"/>
<evidence type="ECO:0000305" key="2"/>
<organism>
    <name type="scientific">Escherichia coli</name>
    <dbReference type="NCBI Taxonomy" id="562"/>
    <lineage>
        <taxon>Bacteria</taxon>
        <taxon>Pseudomonadati</taxon>
        <taxon>Pseudomonadota</taxon>
        <taxon>Gammaproteobacteria</taxon>
        <taxon>Enterobacterales</taxon>
        <taxon>Enterobacteriaceae</taxon>
        <taxon>Escherichia</taxon>
    </lineage>
</organism>